<proteinExistence type="evidence at transcript level"/>
<dbReference type="EMBL" id="AL591389">
    <property type="protein sequence ID" value="CAD60659.1"/>
    <property type="status" value="ALT_SEQ"/>
    <property type="molecule type" value="Genomic_DNA"/>
</dbReference>
<dbReference type="EMBL" id="BC075992">
    <property type="protein sequence ID" value="AAH75992.1"/>
    <property type="molecule type" value="mRNA"/>
</dbReference>
<dbReference type="RefSeq" id="NP_001002603.1">
    <property type="nucleotide sequence ID" value="NM_001002603.2"/>
</dbReference>
<dbReference type="RefSeq" id="XP_005165756.1">
    <property type="nucleotide sequence ID" value="XM_005165699.4"/>
</dbReference>
<dbReference type="RefSeq" id="XP_068077761.1">
    <property type="nucleotide sequence ID" value="XM_068221660.1"/>
</dbReference>
<dbReference type="SMR" id="Q6DHI2"/>
<dbReference type="FunCoup" id="Q6DHI2">
    <property type="interactions" value="342"/>
</dbReference>
<dbReference type="STRING" id="7955.ENSDARP00000043945"/>
<dbReference type="PaxDb" id="7955-ENSDARP00000043945"/>
<dbReference type="Ensembl" id="ENSDART00000043946">
    <property type="protein sequence ID" value="ENSDARP00000043945"/>
    <property type="gene ID" value="ENSDARG00000032005"/>
</dbReference>
<dbReference type="Ensembl" id="ENSDART00000177219">
    <property type="protein sequence ID" value="ENSDARP00000144012"/>
    <property type="gene ID" value="ENSDARG00000115576"/>
</dbReference>
<dbReference type="GeneID" id="368824"/>
<dbReference type="KEGG" id="dre:368824"/>
<dbReference type="AGR" id="ZFIN:ZDB-GENE-030616-358"/>
<dbReference type="CTD" id="85478"/>
<dbReference type="ZFIN" id="ZDB-GENE-030616-358">
    <property type="gene designation" value="ccdc65"/>
</dbReference>
<dbReference type="eggNOG" id="ENOG502QQDD">
    <property type="taxonomic scope" value="Eukaryota"/>
</dbReference>
<dbReference type="HOGENOM" id="CLU_026536_1_0_1"/>
<dbReference type="InParanoid" id="Q6DHI2"/>
<dbReference type="OMA" id="WEYLDLF"/>
<dbReference type="OrthoDB" id="7760980at2759"/>
<dbReference type="PhylomeDB" id="Q6DHI2"/>
<dbReference type="TreeFam" id="TF326074"/>
<dbReference type="PRO" id="PR:Q6DHI2"/>
<dbReference type="Proteomes" id="UP000000437">
    <property type="component" value="Alternate scaffold 6"/>
</dbReference>
<dbReference type="Proteomes" id="UP000000437">
    <property type="component" value="Chromosome 6"/>
</dbReference>
<dbReference type="Bgee" id="ENSDARG00000032005">
    <property type="expression patterns" value="Expressed in testis and 11 other cell types or tissues"/>
</dbReference>
<dbReference type="GO" id="GO:0005858">
    <property type="term" value="C:axonemal dynein complex"/>
    <property type="evidence" value="ECO:0007669"/>
    <property type="project" value="InterPro"/>
</dbReference>
<dbReference type="GO" id="GO:0005930">
    <property type="term" value="C:axoneme"/>
    <property type="evidence" value="ECO:0000318"/>
    <property type="project" value="GO_Central"/>
</dbReference>
<dbReference type="GO" id="GO:0031514">
    <property type="term" value="C:motile cilium"/>
    <property type="evidence" value="ECO:0007669"/>
    <property type="project" value="UniProtKB-SubCell"/>
</dbReference>
<dbReference type="GO" id="GO:0070286">
    <property type="term" value="P:axonemal dynein complex assembly"/>
    <property type="evidence" value="ECO:0000318"/>
    <property type="project" value="GO_Central"/>
</dbReference>
<dbReference type="GO" id="GO:0060285">
    <property type="term" value="P:cilium-dependent cell motility"/>
    <property type="evidence" value="ECO:0000318"/>
    <property type="project" value="GO_Central"/>
</dbReference>
<dbReference type="GO" id="GO:0003352">
    <property type="term" value="P:regulation of cilium movement"/>
    <property type="evidence" value="ECO:0000315"/>
    <property type="project" value="ZFIN"/>
</dbReference>
<dbReference type="InterPro" id="IPR039505">
    <property type="entry name" value="DRC1/2_N"/>
</dbReference>
<dbReference type="InterPro" id="IPR039750">
    <property type="entry name" value="DRC1/DRC2"/>
</dbReference>
<dbReference type="PANTHER" id="PTHR21625:SF0">
    <property type="entry name" value="DYNEIN REGULATORY COMPLEX SUBUNIT 2"/>
    <property type="match status" value="1"/>
</dbReference>
<dbReference type="PANTHER" id="PTHR21625">
    <property type="entry name" value="NYD-SP28 PROTEIN"/>
    <property type="match status" value="1"/>
</dbReference>
<dbReference type="Pfam" id="PF14772">
    <property type="entry name" value="NYD-SP28"/>
    <property type="match status" value="1"/>
</dbReference>
<organism>
    <name type="scientific">Danio rerio</name>
    <name type="common">Zebrafish</name>
    <name type="synonym">Brachydanio rerio</name>
    <dbReference type="NCBI Taxonomy" id="7955"/>
    <lineage>
        <taxon>Eukaryota</taxon>
        <taxon>Metazoa</taxon>
        <taxon>Chordata</taxon>
        <taxon>Craniata</taxon>
        <taxon>Vertebrata</taxon>
        <taxon>Euteleostomi</taxon>
        <taxon>Actinopterygii</taxon>
        <taxon>Neopterygii</taxon>
        <taxon>Teleostei</taxon>
        <taxon>Ostariophysi</taxon>
        <taxon>Cypriniformes</taxon>
        <taxon>Danionidae</taxon>
        <taxon>Danioninae</taxon>
        <taxon>Danio</taxon>
    </lineage>
</organism>
<name>DRC2_DANRE</name>
<keyword id="KW-0966">Cell projection</keyword>
<keyword id="KW-0969">Cilium</keyword>
<keyword id="KW-0175">Coiled coil</keyword>
<keyword id="KW-0963">Cytoplasm</keyword>
<keyword id="KW-0206">Cytoskeleton</keyword>
<keyword id="KW-0282">Flagellum</keyword>
<keyword id="KW-1185">Reference proteome</keyword>
<comment type="function">
    <text evidence="1 3">Component of the nexin-dynein regulatory complex (N-DRC), a key regulator of ciliary/flagellar motility which maintains the alignment and integrity of the distal axoneme and regulates microtubule sliding in motile axonemes (By similarity). Plays a critical role in the assembly of N-DRC and also stabilizes the assembly of multiple inner dynein arms and radial spokes. Coassembles with DRC1 to form a central scaffold needed for assembly of the N-DRC and its attachment to the outer doublet microtubules.</text>
</comment>
<comment type="subunit">
    <text evidence="1">Component of the nexin-dynein regulatory complex (N-DRC).</text>
</comment>
<comment type="subcellular location">
    <subcellularLocation>
        <location evidence="1">Cytoplasm</location>
        <location evidence="1">Cytoskeleton</location>
        <location evidence="1">Flagellum basal body</location>
    </subcellularLocation>
    <subcellularLocation>
        <location evidence="1">Cell projection</location>
        <location evidence="1">Cilium</location>
        <location evidence="1">Flagellum</location>
    </subcellularLocation>
    <subcellularLocation>
        <location evidence="1">Cytoplasm</location>
        <location evidence="1">Cytoskeleton</location>
        <location evidence="1">Flagellum axoneme</location>
    </subcellularLocation>
</comment>
<comment type="disruption phenotype">
    <text evidence="3">Morpholino knockdown of the protein causes strong ciliopathy phenotypes, including pronephric cysts, axis curvature, left-right asymmetry defects and hydrocephalus. Cilia length and number appear normal, but cilia are dyskinetic.</text>
</comment>
<comment type="similarity">
    <text>Belongs to the DRC2 family.</text>
</comment>
<comment type="sequence caution" evidence="5">
    <conflict type="erroneous gene model prediction">
        <sequence resource="EMBL-CDS" id="CAD60659"/>
    </conflict>
</comment>
<reference key="1">
    <citation type="journal article" date="2013" name="Nature">
        <title>The zebrafish reference genome sequence and its relationship to the human genome.</title>
        <authorList>
            <person name="Howe K."/>
            <person name="Clark M.D."/>
            <person name="Torroja C.F."/>
            <person name="Torrance J."/>
            <person name="Berthelot C."/>
            <person name="Muffato M."/>
            <person name="Collins J.E."/>
            <person name="Humphray S."/>
            <person name="McLaren K."/>
            <person name="Matthews L."/>
            <person name="McLaren S."/>
            <person name="Sealy I."/>
            <person name="Caccamo M."/>
            <person name="Churcher C."/>
            <person name="Scott C."/>
            <person name="Barrett J.C."/>
            <person name="Koch R."/>
            <person name="Rauch G.J."/>
            <person name="White S."/>
            <person name="Chow W."/>
            <person name="Kilian B."/>
            <person name="Quintais L.T."/>
            <person name="Guerra-Assuncao J.A."/>
            <person name="Zhou Y."/>
            <person name="Gu Y."/>
            <person name="Yen J."/>
            <person name="Vogel J.H."/>
            <person name="Eyre T."/>
            <person name="Redmond S."/>
            <person name="Banerjee R."/>
            <person name="Chi J."/>
            <person name="Fu B."/>
            <person name="Langley E."/>
            <person name="Maguire S.F."/>
            <person name="Laird G.K."/>
            <person name="Lloyd D."/>
            <person name="Kenyon E."/>
            <person name="Donaldson S."/>
            <person name="Sehra H."/>
            <person name="Almeida-King J."/>
            <person name="Loveland J."/>
            <person name="Trevanion S."/>
            <person name="Jones M."/>
            <person name="Quail M."/>
            <person name="Willey D."/>
            <person name="Hunt A."/>
            <person name="Burton J."/>
            <person name="Sims S."/>
            <person name="McLay K."/>
            <person name="Plumb B."/>
            <person name="Davis J."/>
            <person name="Clee C."/>
            <person name="Oliver K."/>
            <person name="Clark R."/>
            <person name="Riddle C."/>
            <person name="Elliot D."/>
            <person name="Threadgold G."/>
            <person name="Harden G."/>
            <person name="Ware D."/>
            <person name="Begum S."/>
            <person name="Mortimore B."/>
            <person name="Kerry G."/>
            <person name="Heath P."/>
            <person name="Phillimore B."/>
            <person name="Tracey A."/>
            <person name="Corby N."/>
            <person name="Dunn M."/>
            <person name="Johnson C."/>
            <person name="Wood J."/>
            <person name="Clark S."/>
            <person name="Pelan S."/>
            <person name="Griffiths G."/>
            <person name="Smith M."/>
            <person name="Glithero R."/>
            <person name="Howden P."/>
            <person name="Barker N."/>
            <person name="Lloyd C."/>
            <person name="Stevens C."/>
            <person name="Harley J."/>
            <person name="Holt K."/>
            <person name="Panagiotidis G."/>
            <person name="Lovell J."/>
            <person name="Beasley H."/>
            <person name="Henderson C."/>
            <person name="Gordon D."/>
            <person name="Auger K."/>
            <person name="Wright D."/>
            <person name="Collins J."/>
            <person name="Raisen C."/>
            <person name="Dyer L."/>
            <person name="Leung K."/>
            <person name="Robertson L."/>
            <person name="Ambridge K."/>
            <person name="Leongamornlert D."/>
            <person name="McGuire S."/>
            <person name="Gilderthorp R."/>
            <person name="Griffiths C."/>
            <person name="Manthravadi D."/>
            <person name="Nichol S."/>
            <person name="Barker G."/>
            <person name="Whitehead S."/>
            <person name="Kay M."/>
            <person name="Brown J."/>
            <person name="Murnane C."/>
            <person name="Gray E."/>
            <person name="Humphries M."/>
            <person name="Sycamore N."/>
            <person name="Barker D."/>
            <person name="Saunders D."/>
            <person name="Wallis J."/>
            <person name="Babbage A."/>
            <person name="Hammond S."/>
            <person name="Mashreghi-Mohammadi M."/>
            <person name="Barr L."/>
            <person name="Martin S."/>
            <person name="Wray P."/>
            <person name="Ellington A."/>
            <person name="Matthews N."/>
            <person name="Ellwood M."/>
            <person name="Woodmansey R."/>
            <person name="Clark G."/>
            <person name="Cooper J."/>
            <person name="Tromans A."/>
            <person name="Grafham D."/>
            <person name="Skuce C."/>
            <person name="Pandian R."/>
            <person name="Andrews R."/>
            <person name="Harrison E."/>
            <person name="Kimberley A."/>
            <person name="Garnett J."/>
            <person name="Fosker N."/>
            <person name="Hall R."/>
            <person name="Garner P."/>
            <person name="Kelly D."/>
            <person name="Bird C."/>
            <person name="Palmer S."/>
            <person name="Gehring I."/>
            <person name="Berger A."/>
            <person name="Dooley C.M."/>
            <person name="Ersan-Urun Z."/>
            <person name="Eser C."/>
            <person name="Geiger H."/>
            <person name="Geisler M."/>
            <person name="Karotki L."/>
            <person name="Kirn A."/>
            <person name="Konantz J."/>
            <person name="Konantz M."/>
            <person name="Oberlander M."/>
            <person name="Rudolph-Geiger S."/>
            <person name="Teucke M."/>
            <person name="Lanz C."/>
            <person name="Raddatz G."/>
            <person name="Osoegawa K."/>
            <person name="Zhu B."/>
            <person name="Rapp A."/>
            <person name="Widaa S."/>
            <person name="Langford C."/>
            <person name="Yang F."/>
            <person name="Schuster S.C."/>
            <person name="Carter N.P."/>
            <person name="Harrow J."/>
            <person name="Ning Z."/>
            <person name="Herrero J."/>
            <person name="Searle S.M."/>
            <person name="Enright A."/>
            <person name="Geisler R."/>
            <person name="Plasterk R.H."/>
            <person name="Lee C."/>
            <person name="Westerfield M."/>
            <person name="de Jong P.J."/>
            <person name="Zon L.I."/>
            <person name="Postlethwait J.H."/>
            <person name="Nusslein-Volhard C."/>
            <person name="Hubbard T.J."/>
            <person name="Roest Crollius H."/>
            <person name="Rogers J."/>
            <person name="Stemple D.L."/>
        </authorList>
    </citation>
    <scope>NUCLEOTIDE SEQUENCE [LARGE SCALE GENOMIC DNA]</scope>
    <source>
        <strain>Tuebingen</strain>
    </source>
</reference>
<reference key="2">
    <citation type="submission" date="2004-07" db="EMBL/GenBank/DDBJ databases">
        <authorList>
            <consortium name="NIH - Zebrafish Gene Collection (ZGC) project"/>
        </authorList>
    </citation>
    <scope>NUCLEOTIDE SEQUENCE [LARGE SCALE MRNA]</scope>
</reference>
<reference key="3">
    <citation type="journal article" date="2013" name="Am. J. Hum. Genet.">
        <title>Zebrafish ciliopathy screen plus human mutational analysis identifies C21orf59 and CCDC65 defects as causing primary ciliary dyskinesia.</title>
        <authorList>
            <person name="Austin-Tse C."/>
            <person name="Halbritter J."/>
            <person name="Zariwala M.A."/>
            <person name="Gilberti R.M."/>
            <person name="Gee H.Y."/>
            <person name="Hellman N."/>
            <person name="Pathak N."/>
            <person name="Liu Y."/>
            <person name="Panizzi J.R."/>
            <person name="Patel-King R.S."/>
            <person name="Tritschler D."/>
            <person name="Bower R."/>
            <person name="O'Toole E."/>
            <person name="Porath J.D."/>
            <person name="Hurd T.W."/>
            <person name="Chaki M."/>
            <person name="Diaz K.A."/>
            <person name="Kohl S."/>
            <person name="Lovric S."/>
            <person name="Hwang D.Y."/>
            <person name="Braun D.A."/>
            <person name="Schueler M."/>
            <person name="Airik R."/>
            <person name="Otto E.A."/>
            <person name="Leigh M.W."/>
            <person name="Noone P.G."/>
            <person name="Carson J.L."/>
            <person name="Davis S.D."/>
            <person name="Pittman J.E."/>
            <person name="Ferkol T.W."/>
            <person name="Atkinson J.J."/>
            <person name="Olivier K.N."/>
            <person name="Sagel S.D."/>
            <person name="Dell S.D."/>
            <person name="Rosenfeld M."/>
            <person name="Milla C.E."/>
            <person name="Loges N.T."/>
            <person name="Omran H."/>
            <person name="Porter M.E."/>
            <person name="King S.M."/>
            <person name="Knowles M.R."/>
            <person name="Drummond I.A."/>
            <person name="Hildebrandt F."/>
        </authorList>
    </citation>
    <scope>FUNCTION</scope>
    <scope>DISRUPTION PHENOTYPE</scope>
</reference>
<feature type="chain" id="PRO_0000284782" description="Dynein regulatory complex subunit 2">
    <location>
        <begin position="1"/>
        <end position="492"/>
    </location>
</feature>
<feature type="coiled-coil region" evidence="2">
    <location>
        <begin position="16"/>
        <end position="95"/>
    </location>
</feature>
<feature type="coiled-coil region" evidence="2">
    <location>
        <begin position="256"/>
        <end position="318"/>
    </location>
</feature>
<feature type="coiled-coil region" evidence="2">
    <location>
        <begin position="373"/>
        <end position="401"/>
    </location>
</feature>
<feature type="sequence conflict" description="In Ref. 2; AAH75992." evidence="5" ref="2">
    <original>A</original>
    <variation>G</variation>
    <location>
        <position position="9"/>
    </location>
</feature>
<feature type="sequence conflict" description="In Ref. 2; AAH75992." evidence="5" ref="2">
    <original>K</original>
    <variation>M</variation>
    <location>
        <position position="120"/>
    </location>
</feature>
<feature type="sequence conflict" description="In Ref. 2; AAH75992." evidence="5" ref="2">
    <original>V</original>
    <variation>E</variation>
    <location>
        <position position="151"/>
    </location>
</feature>
<feature type="sequence conflict" description="In Ref. 2; AAH75992." evidence="5" ref="2">
    <original>E</original>
    <variation>K</variation>
    <location>
        <position position="375"/>
    </location>
</feature>
<feature type="sequence conflict" description="In Ref. 2; AAH75992." evidence="5" ref="2">
    <original>R</original>
    <variation>Q</variation>
    <location>
        <position position="453"/>
    </location>
</feature>
<evidence type="ECO:0000250" key="1">
    <source>
        <dbReference type="UniProtKB" id="A8JB22"/>
    </source>
</evidence>
<evidence type="ECO:0000255" key="2"/>
<evidence type="ECO:0000269" key="3">
    <source>
    </source>
</evidence>
<evidence type="ECO:0000303" key="4">
    <source>
    </source>
</evidence>
<evidence type="ECO:0000305" key="5"/>
<gene>
    <name type="primary">ccdc65</name>
    <name evidence="4" type="synonym">drc2</name>
    <name type="ORF">si:dz202l16.3</name>
</gene>
<protein>
    <recommendedName>
        <fullName evidence="4">Dynein regulatory complex subunit 2</fullName>
    </recommendedName>
    <alternativeName>
        <fullName>Coiled-coil domain-containing protein 65</fullName>
    </alternativeName>
</protein>
<accession>Q6DHI2</accession>
<accession>Q7ZZA2</accession>
<sequence>MPKKAGKKAGGKLAGLTEEERLLYMQQKAQAEEEIAKRKEDMLTHFLKDKLQKEEKNTVLNLHKLRQQWRAVLTQTKIAELRNDMSVLSQTFERVLDYKDNIIRSLQVDLSERELQSELKRSSHLHNVDCLLEIHKSRLAQLEFNFKSSLVELSSEYNTEREQILSQHQQECVDLDNVMFSMEKHYSDLDGEAKRDYQSTRNQIKKRNFDDKQAVKEQMDGVVEKLWQDQQQVLNHYNESTRDKIITTDDLMNKDVQSAKEIDSLKKHIQKLQDSISTFRGQLSSGQTDKTAEQLRSERDELAQEVQHFRVQLNAAQAIRKKHITKLTVQSNDATKKLQEIVARGERLLRQCEMCCKLETEHEKVLPFYKSSLSEEEQKQEKAKAMESSNEKLTQLMHDYSPLAKFWQRYNKVELDCLCVKREKLLLLQENERLRLFLKQYLDEVSVSDESFRQQKLLVVSSPALQDTAATDRHQQKRHVVQEAACIVQKQL</sequence>